<comment type="function">
    <text evidence="1">Together with its co-chaperonin GroES, plays an essential role in assisting protein folding. The GroEL-GroES system forms a nano-cage that allows encapsulation of the non-native substrate proteins and provides a physical environment optimized to promote and accelerate protein folding.</text>
</comment>
<comment type="catalytic activity">
    <reaction evidence="1">
        <text>ATP + H2O + a folded polypeptide = ADP + phosphate + an unfolded polypeptide.</text>
        <dbReference type="EC" id="5.6.1.7"/>
    </reaction>
</comment>
<comment type="subunit">
    <text evidence="1">Forms a cylinder of 14 subunits composed of two heptameric rings stacked back-to-back. Interacts with the co-chaperonin GroES.</text>
</comment>
<comment type="subcellular location">
    <subcellularLocation>
        <location evidence="1">Cytoplasm</location>
    </subcellularLocation>
</comment>
<comment type="similarity">
    <text evidence="1">Belongs to the chaperonin (HSP60) family.</text>
</comment>
<evidence type="ECO:0000255" key="1">
    <source>
        <dbReference type="HAMAP-Rule" id="MF_00600"/>
    </source>
</evidence>
<accession>Q3AHM4</accession>
<sequence length="544" mass="57043">MAKRIIYNENARRALEKGIDILCEAVAVTLGPKGRNVVLEKKFGAPQIINDGVTIAKEIELEDHIENTGVALIRQAASKTNDAAGDGTTTATVLAHAMVKAGLRNVAAGANAITLKKGIDKASDFLVSKIKEMAKPIADSNAIAQVGTISAGNDEEVGKMIADAMDKVGKEGVISLEEGKSMETELEVTEGMRFDKGYISPYFATDTERMEAVLDEPYILLTDKKIGLVQDLVPVLEQIARTGKPLLIIAEDIEKEALATLVVNRLRGVLNVAAVKAPGFGDRRKAMLEDMAVLTNGQLITEDAGLKLENAKLEMLGTARRITINKDTTTIVAEGNEAAVGARCEQIKKQMDETDSTYDKEKLQERLAKLAGGVAVVKVGAATETEMKDKKLRLEDAINATKAAVEEGIVPGGGTTLAHLAPALEQWAASSLSGEELIGANIVAAALTAPLMRIAENAGANGAVVAENVKARAGAEGFNAASGEYVDMLAAGIVDPAKVTRSGLQNAASIAGMVLTTECIVADLPEKKEAAPAGGGMGGGDFDY</sequence>
<protein>
    <recommendedName>
        <fullName evidence="1">Chaperonin GroEL 2</fullName>
        <ecNumber evidence="1">5.6.1.7</ecNumber>
    </recommendedName>
    <alternativeName>
        <fullName evidence="1">60 kDa chaperonin 2</fullName>
    </alternativeName>
    <alternativeName>
        <fullName evidence="1">Chaperonin-60 2</fullName>
        <shortName evidence="1">Cpn60 2</shortName>
    </alternativeName>
</protein>
<name>CH602_SYNSC</name>
<keyword id="KW-0067">ATP-binding</keyword>
<keyword id="KW-0143">Chaperone</keyword>
<keyword id="KW-0963">Cytoplasm</keyword>
<keyword id="KW-0413">Isomerase</keyword>
<keyword id="KW-0547">Nucleotide-binding</keyword>
<proteinExistence type="inferred from homology"/>
<reference key="1">
    <citation type="submission" date="2005-07" db="EMBL/GenBank/DDBJ databases">
        <title>Complete sequence of Synechococcus sp. CC9605.</title>
        <authorList>
            <consortium name="US DOE Joint Genome Institute"/>
            <person name="Copeland A."/>
            <person name="Lucas S."/>
            <person name="Lapidus A."/>
            <person name="Barry K."/>
            <person name="Detter J.C."/>
            <person name="Glavina T."/>
            <person name="Hammon N."/>
            <person name="Israni S."/>
            <person name="Pitluck S."/>
            <person name="Schmutz J."/>
            <person name="Martinez M."/>
            <person name="Larimer F."/>
            <person name="Land M."/>
            <person name="Kyrpides N."/>
            <person name="Ivanova N."/>
            <person name="Richardson P."/>
        </authorList>
    </citation>
    <scope>NUCLEOTIDE SEQUENCE [LARGE SCALE GENOMIC DNA]</scope>
    <source>
        <strain>CC9605</strain>
    </source>
</reference>
<gene>
    <name evidence="1" type="primary">groEL2</name>
    <name evidence="1" type="synonym">groL2</name>
    <name type="ordered locus">Syncc9605_2169</name>
</gene>
<feature type="chain" id="PRO_0000257003" description="Chaperonin GroEL 2">
    <location>
        <begin position="1"/>
        <end position="544"/>
    </location>
</feature>
<feature type="binding site" evidence="1">
    <location>
        <begin position="29"/>
        <end position="32"/>
    </location>
    <ligand>
        <name>ATP</name>
        <dbReference type="ChEBI" id="CHEBI:30616"/>
    </ligand>
</feature>
<feature type="binding site" evidence="1">
    <location>
        <begin position="86"/>
        <end position="90"/>
    </location>
    <ligand>
        <name>ATP</name>
        <dbReference type="ChEBI" id="CHEBI:30616"/>
    </ligand>
</feature>
<feature type="binding site" evidence="1">
    <location>
        <position position="413"/>
    </location>
    <ligand>
        <name>ATP</name>
        <dbReference type="ChEBI" id="CHEBI:30616"/>
    </ligand>
</feature>
<feature type="binding site" evidence="1">
    <location>
        <begin position="479"/>
        <end position="481"/>
    </location>
    <ligand>
        <name>ATP</name>
        <dbReference type="ChEBI" id="CHEBI:30616"/>
    </ligand>
</feature>
<feature type="binding site" evidence="1">
    <location>
        <position position="495"/>
    </location>
    <ligand>
        <name>ATP</name>
        <dbReference type="ChEBI" id="CHEBI:30616"/>
    </ligand>
</feature>
<organism>
    <name type="scientific">Synechococcus sp. (strain CC9605)</name>
    <dbReference type="NCBI Taxonomy" id="110662"/>
    <lineage>
        <taxon>Bacteria</taxon>
        <taxon>Bacillati</taxon>
        <taxon>Cyanobacteriota</taxon>
        <taxon>Cyanophyceae</taxon>
        <taxon>Synechococcales</taxon>
        <taxon>Synechococcaceae</taxon>
        <taxon>Synechococcus</taxon>
    </lineage>
</organism>
<dbReference type="EC" id="5.6.1.7" evidence="1"/>
<dbReference type="EMBL" id="CP000110">
    <property type="protein sequence ID" value="ABB35908.1"/>
    <property type="molecule type" value="Genomic_DNA"/>
</dbReference>
<dbReference type="SMR" id="Q3AHM4"/>
<dbReference type="STRING" id="110662.Syncc9605_2169"/>
<dbReference type="KEGG" id="syd:Syncc9605_2169"/>
<dbReference type="eggNOG" id="COG0459">
    <property type="taxonomic scope" value="Bacteria"/>
</dbReference>
<dbReference type="HOGENOM" id="CLU_016503_3_0_3"/>
<dbReference type="OrthoDB" id="9766614at2"/>
<dbReference type="GO" id="GO:0005737">
    <property type="term" value="C:cytoplasm"/>
    <property type="evidence" value="ECO:0007669"/>
    <property type="project" value="UniProtKB-SubCell"/>
</dbReference>
<dbReference type="GO" id="GO:0005524">
    <property type="term" value="F:ATP binding"/>
    <property type="evidence" value="ECO:0007669"/>
    <property type="project" value="UniProtKB-UniRule"/>
</dbReference>
<dbReference type="GO" id="GO:0140662">
    <property type="term" value="F:ATP-dependent protein folding chaperone"/>
    <property type="evidence" value="ECO:0007669"/>
    <property type="project" value="InterPro"/>
</dbReference>
<dbReference type="GO" id="GO:0016853">
    <property type="term" value="F:isomerase activity"/>
    <property type="evidence" value="ECO:0007669"/>
    <property type="project" value="UniProtKB-KW"/>
</dbReference>
<dbReference type="GO" id="GO:0051082">
    <property type="term" value="F:unfolded protein binding"/>
    <property type="evidence" value="ECO:0007669"/>
    <property type="project" value="UniProtKB-UniRule"/>
</dbReference>
<dbReference type="GO" id="GO:0042026">
    <property type="term" value="P:protein refolding"/>
    <property type="evidence" value="ECO:0007669"/>
    <property type="project" value="UniProtKB-UniRule"/>
</dbReference>
<dbReference type="CDD" id="cd03344">
    <property type="entry name" value="GroEL"/>
    <property type="match status" value="1"/>
</dbReference>
<dbReference type="FunFam" id="3.50.7.10:FF:000001">
    <property type="entry name" value="60 kDa chaperonin"/>
    <property type="match status" value="1"/>
</dbReference>
<dbReference type="Gene3D" id="3.50.7.10">
    <property type="entry name" value="GroEL"/>
    <property type="match status" value="1"/>
</dbReference>
<dbReference type="Gene3D" id="1.10.560.10">
    <property type="entry name" value="GroEL-like equatorial domain"/>
    <property type="match status" value="1"/>
</dbReference>
<dbReference type="Gene3D" id="3.30.260.10">
    <property type="entry name" value="TCP-1-like chaperonin intermediate domain"/>
    <property type="match status" value="1"/>
</dbReference>
<dbReference type="HAMAP" id="MF_00600">
    <property type="entry name" value="CH60"/>
    <property type="match status" value="1"/>
</dbReference>
<dbReference type="InterPro" id="IPR018370">
    <property type="entry name" value="Chaperonin_Cpn60_CS"/>
</dbReference>
<dbReference type="InterPro" id="IPR001844">
    <property type="entry name" value="Cpn60/GroEL"/>
</dbReference>
<dbReference type="InterPro" id="IPR002423">
    <property type="entry name" value="Cpn60/GroEL/TCP-1"/>
</dbReference>
<dbReference type="InterPro" id="IPR027409">
    <property type="entry name" value="GroEL-like_apical_dom_sf"/>
</dbReference>
<dbReference type="InterPro" id="IPR027413">
    <property type="entry name" value="GROEL-like_equatorial_sf"/>
</dbReference>
<dbReference type="InterPro" id="IPR027410">
    <property type="entry name" value="TCP-1-like_intermed_sf"/>
</dbReference>
<dbReference type="NCBIfam" id="TIGR02348">
    <property type="entry name" value="GroEL"/>
    <property type="match status" value="1"/>
</dbReference>
<dbReference type="NCBIfam" id="NF000592">
    <property type="entry name" value="PRK00013.1"/>
    <property type="match status" value="1"/>
</dbReference>
<dbReference type="NCBIfam" id="NF009487">
    <property type="entry name" value="PRK12849.1"/>
    <property type="match status" value="1"/>
</dbReference>
<dbReference type="NCBIfam" id="NF009488">
    <property type="entry name" value="PRK12850.1"/>
    <property type="match status" value="1"/>
</dbReference>
<dbReference type="NCBIfam" id="NF009489">
    <property type="entry name" value="PRK12851.1"/>
    <property type="match status" value="1"/>
</dbReference>
<dbReference type="PANTHER" id="PTHR45633">
    <property type="entry name" value="60 KDA HEAT SHOCK PROTEIN, MITOCHONDRIAL"/>
    <property type="match status" value="1"/>
</dbReference>
<dbReference type="Pfam" id="PF00118">
    <property type="entry name" value="Cpn60_TCP1"/>
    <property type="match status" value="1"/>
</dbReference>
<dbReference type="PRINTS" id="PR00298">
    <property type="entry name" value="CHAPERONIN60"/>
</dbReference>
<dbReference type="SUPFAM" id="SSF52029">
    <property type="entry name" value="GroEL apical domain-like"/>
    <property type="match status" value="1"/>
</dbReference>
<dbReference type="SUPFAM" id="SSF48592">
    <property type="entry name" value="GroEL equatorial domain-like"/>
    <property type="match status" value="2"/>
</dbReference>
<dbReference type="PROSITE" id="PS00296">
    <property type="entry name" value="CHAPERONINS_CPN60"/>
    <property type="match status" value="1"/>
</dbReference>